<protein>
    <recommendedName>
        <fullName evidence="8">Neuron-specific calcium-binding protein hippocalcin</fullName>
    </recommendedName>
    <alternativeName>
        <fullName evidence="7">P23K</fullName>
    </alternativeName>
</protein>
<comment type="function">
    <text evidence="1 4">Calcium-binding protein that may play a role in the regulation of voltage-dependent calcium channels (By similarity). May also play a role in cyclic-nucleotide-mediated signaling through the regulation of adenylate and guanylate cyclases (PubMed:15336960).</text>
</comment>
<comment type="subunit">
    <text evidence="1">Oligomer; oligomerization is calcium-dependent. May interact with the voltage-dependent P/Q- and N-type calcium channels CACNA1A and CACNA1B.</text>
</comment>
<comment type="interaction">
    <interactant intactId="EBI-908193">
        <id>P84076</id>
    </interactant>
    <interactant intactId="EBI-907809">
        <id>P14100</id>
        <label>PDE1A</label>
    </interactant>
    <organismsDiffer>true</organismsDiffer>
    <experiments>2</experiments>
</comment>
<comment type="subcellular location">
    <subcellularLocation>
        <location evidence="5">Cytoplasm</location>
        <location evidence="5">Cytosol</location>
    </subcellularLocation>
    <subcellularLocation>
        <location evidence="5 6">Membrane</location>
        <topology evidence="5 6">Peripheral membrane protein</topology>
    </subcellularLocation>
    <text evidence="1 5 6">Association with membranes is calcium-dependent (PubMed:1543495, PubMed:8360179). Enriched in the perinuclear region, probably at the trans Golgi network in response to calcium (By similarity).</text>
</comment>
<comment type="tissue specificity">
    <text evidence="3 4">Neuron-specific in the hippocampus (PubMed:1280427). Also detected in olfactory epithelium (PubMed:15336960).</text>
</comment>
<comment type="domain">
    <text evidence="5 6">Binds 3 calcium via EF-hand domains. The cryptic EF-hand 1 does not bind calcium.</text>
</comment>
<comment type="PTM">
    <text evidence="6">Myristoylation facilitates association with membranes.</text>
</comment>
<comment type="similarity">
    <text evidence="8">Belongs to the recoverin family.</text>
</comment>
<organism>
    <name type="scientific">Rattus norvegicus</name>
    <name type="common">Rat</name>
    <dbReference type="NCBI Taxonomy" id="10116"/>
    <lineage>
        <taxon>Eukaryota</taxon>
        <taxon>Metazoa</taxon>
        <taxon>Chordata</taxon>
        <taxon>Craniata</taxon>
        <taxon>Vertebrata</taxon>
        <taxon>Euteleostomi</taxon>
        <taxon>Mammalia</taxon>
        <taxon>Eutheria</taxon>
        <taxon>Euarchontoglires</taxon>
        <taxon>Glires</taxon>
        <taxon>Rodentia</taxon>
        <taxon>Myomorpha</taxon>
        <taxon>Muroidea</taxon>
        <taxon>Muridae</taxon>
        <taxon>Murinae</taxon>
        <taxon>Rattus</taxon>
    </lineage>
</organism>
<feature type="initiator methionine" description="Removed" evidence="6">
    <location>
        <position position="1"/>
    </location>
</feature>
<feature type="chain" id="PRO_0000073770" description="Neuron-specific calcium-binding protein hippocalcin">
    <location>
        <begin position="2"/>
        <end position="193"/>
    </location>
</feature>
<feature type="domain" description="EF-hand 1" evidence="8">
    <location>
        <begin position="24"/>
        <end position="59"/>
    </location>
</feature>
<feature type="domain" description="EF-hand 2" evidence="2">
    <location>
        <begin position="60"/>
        <end position="95"/>
    </location>
</feature>
<feature type="domain" description="EF-hand 3" evidence="2">
    <location>
        <begin position="96"/>
        <end position="131"/>
    </location>
</feature>
<feature type="domain" description="EF-hand 4" evidence="2">
    <location>
        <begin position="144"/>
        <end position="179"/>
    </location>
</feature>
<feature type="binding site" evidence="2">
    <location>
        <position position="73"/>
    </location>
    <ligand>
        <name>Ca(2+)</name>
        <dbReference type="ChEBI" id="CHEBI:29108"/>
        <label>1</label>
    </ligand>
</feature>
<feature type="binding site" evidence="2">
    <location>
        <position position="75"/>
    </location>
    <ligand>
        <name>Ca(2+)</name>
        <dbReference type="ChEBI" id="CHEBI:29108"/>
        <label>1</label>
    </ligand>
</feature>
<feature type="binding site" evidence="2">
    <location>
        <position position="77"/>
    </location>
    <ligand>
        <name>Ca(2+)</name>
        <dbReference type="ChEBI" id="CHEBI:29108"/>
        <label>1</label>
    </ligand>
</feature>
<feature type="binding site" evidence="2">
    <location>
        <position position="79"/>
    </location>
    <ligand>
        <name>Ca(2+)</name>
        <dbReference type="ChEBI" id="CHEBI:29108"/>
        <label>1</label>
    </ligand>
</feature>
<feature type="binding site" evidence="2">
    <location>
        <position position="84"/>
    </location>
    <ligand>
        <name>Ca(2+)</name>
        <dbReference type="ChEBI" id="CHEBI:29108"/>
        <label>1</label>
    </ligand>
</feature>
<feature type="binding site" evidence="2">
    <location>
        <position position="109"/>
    </location>
    <ligand>
        <name>Ca(2+)</name>
        <dbReference type="ChEBI" id="CHEBI:29108"/>
        <label>2</label>
    </ligand>
</feature>
<feature type="binding site" evidence="2">
    <location>
        <position position="111"/>
    </location>
    <ligand>
        <name>Ca(2+)</name>
        <dbReference type="ChEBI" id="CHEBI:29108"/>
        <label>2</label>
    </ligand>
</feature>
<feature type="binding site" evidence="2">
    <location>
        <position position="113"/>
    </location>
    <ligand>
        <name>Ca(2+)</name>
        <dbReference type="ChEBI" id="CHEBI:29108"/>
        <label>2</label>
    </ligand>
</feature>
<feature type="binding site" evidence="2">
    <location>
        <position position="115"/>
    </location>
    <ligand>
        <name>Ca(2+)</name>
        <dbReference type="ChEBI" id="CHEBI:29108"/>
        <label>2</label>
    </ligand>
</feature>
<feature type="binding site" evidence="2">
    <location>
        <position position="120"/>
    </location>
    <ligand>
        <name>Ca(2+)</name>
        <dbReference type="ChEBI" id="CHEBI:29108"/>
        <label>2</label>
    </ligand>
</feature>
<feature type="binding site" evidence="2">
    <location>
        <position position="157"/>
    </location>
    <ligand>
        <name>Ca(2+)</name>
        <dbReference type="ChEBI" id="CHEBI:29108"/>
        <label>3</label>
    </ligand>
</feature>
<feature type="binding site" evidence="2">
    <location>
        <position position="159"/>
    </location>
    <ligand>
        <name>Ca(2+)</name>
        <dbReference type="ChEBI" id="CHEBI:29108"/>
        <label>3</label>
    </ligand>
</feature>
<feature type="binding site" evidence="2">
    <location>
        <position position="161"/>
    </location>
    <ligand>
        <name>Ca(2+)</name>
        <dbReference type="ChEBI" id="CHEBI:29108"/>
        <label>3</label>
    </ligand>
</feature>
<feature type="binding site" evidence="2">
    <location>
        <position position="163"/>
    </location>
    <ligand>
        <name>Ca(2+)</name>
        <dbReference type="ChEBI" id="CHEBI:29108"/>
        <label>3</label>
    </ligand>
</feature>
<feature type="binding site" evidence="2">
    <location>
        <position position="168"/>
    </location>
    <ligand>
        <name>Ca(2+)</name>
        <dbReference type="ChEBI" id="CHEBI:29108"/>
        <label>3</label>
    </ligand>
</feature>
<feature type="lipid moiety-binding region" description="N-myristoyl glycine" evidence="6">
    <location>
        <position position="2"/>
    </location>
</feature>
<feature type="sequence conflict" description="In Ref. 5; AA sequence." evidence="8" ref="5">
    <original>D</original>
    <variation>G</variation>
    <location>
        <position position="60"/>
    </location>
</feature>
<feature type="sequence conflict" description="In Ref. 5; AA sequence." evidence="8" ref="5">
    <original>M</original>
    <variation>N</variation>
    <location>
        <position position="102"/>
    </location>
</feature>
<feature type="sequence conflict" description="In Ref. 5; AA sequence." evidence="8" ref="5">
    <original>N</original>
    <variation>D</variation>
    <location>
        <position position="113"/>
    </location>
</feature>
<feature type="sequence conflict" description="In Ref. 5; AA sequence." evidence="8" ref="5">
    <original>ES</original>
    <variation>TF</variation>
    <location>
        <begin position="142"/>
        <end position="143"/>
    </location>
</feature>
<gene>
    <name evidence="9" type="primary">Hpca</name>
</gene>
<reference key="1">
    <citation type="journal article" date="1992" name="Biochem. Biophys. Res. Commun.">
        <title>Molecular cloning of hippocalcin, a novel calcium-binding protein of the recoverin family exclusively expressed in hippocampus.</title>
        <authorList>
            <person name="Kobayashi M."/>
            <person name="Takamatsu K."/>
            <person name="Saitoh S."/>
            <person name="Miura M."/>
            <person name="Noguchi T."/>
        </authorList>
    </citation>
    <scope>NUCLEOTIDE SEQUENCE [MRNA]</scope>
    <scope>TISSUE SPECIFICITY</scope>
    <source>
        <strain>Wistar</strain>
        <tissue>Brain</tissue>
    </source>
</reference>
<reference key="2">
    <citation type="journal article" date="1993" name="Biochem. Biophys. Res. Commun.">
        <title>Molecular cloning of hippocalcin, a novel calcium-binding protein of the recoverin family exclusively expressed in hippocampus.</title>
        <authorList>
            <person name="Kobayashi M."/>
            <person name="Takamatsu K."/>
            <person name="Saitoh S."/>
            <person name="Miura M."/>
            <person name="Noguchi T."/>
        </authorList>
    </citation>
    <scope>SEQUENCE REVISION</scope>
</reference>
<reference key="3">
    <citation type="journal article" date="2004" name="Biochem. Biophys. Res. Commun.">
        <title>Hippocalcin in the olfactory epithelium: a mediator of second messenger signaling.</title>
        <authorList>
            <person name="Mammen A."/>
            <person name="Simpson P.J."/>
            <person name="Nighorn A."/>
            <person name="Imanishi Y."/>
            <person name="Palczewski K."/>
            <person name="Ronnett G.V."/>
            <person name="Moon C."/>
        </authorList>
    </citation>
    <scope>NUCLEOTIDE SEQUENCE [MRNA]</scope>
    <scope>FUNCTION</scope>
    <scope>TISSUE SPECIFICITY</scope>
    <source>
        <strain>Sprague-Dawley</strain>
        <tissue>Olfactory epithelium</tissue>
    </source>
</reference>
<reference key="4">
    <citation type="journal article" date="2004" name="Genome Res.">
        <title>The status, quality, and expansion of the NIH full-length cDNA project: the Mammalian Gene Collection (MGC).</title>
        <authorList>
            <consortium name="The MGC Project Team"/>
        </authorList>
    </citation>
    <scope>NUCLEOTIDE SEQUENCE [LARGE SCALE MRNA]</scope>
    <source>
        <tissue>Brain</tissue>
    </source>
</reference>
<reference key="5">
    <citation type="journal article" date="1992" name="Biochem. Biophys. Res. Commun.">
        <title>Isolation and characterization of recoverin-like Ca(2+)-binding protein from rat brain.</title>
        <authorList>
            <person name="Takamatsu K."/>
            <person name="Kitamura K."/>
            <person name="Noguchi T."/>
        </authorList>
    </citation>
    <scope>PRELIMINARY PROTEIN SEQUENCE OF 51-63; 101-116 AND 138-145</scope>
    <scope>SUBCELLULAR LOCATION</scope>
    <scope>TOPOLOGY</scope>
    <scope>CALCIUM-BINDING</scope>
    <source>
        <tissue>Brain</tissue>
    </source>
</reference>
<reference key="6">
    <citation type="journal article" date="1996" name="Neuroscience">
        <title>Characterization of the rat hippocalcin gene: the 5' flanking region directs expression to the hippocampus.</title>
        <authorList>
            <person name="Grant A.L."/>
            <person name="Jones A."/>
            <person name="Thomas K.L."/>
            <person name="Wisden W."/>
        </authorList>
    </citation>
    <scope>NUCLEOTIDE SEQUENCE [MRNA] OF 1-37</scope>
    <source>
        <strain>Sprague-Dawley</strain>
        <tissue>Testis</tissue>
    </source>
</reference>
<reference key="7">
    <citation type="submission" date="2007-07" db="UniProtKB">
        <authorList>
            <person name="Lubec G."/>
            <person name="Kang S.U."/>
        </authorList>
    </citation>
    <scope>PROTEIN SEQUENCE OF 51-94; 138-148; 164-171 AND 175-181</scope>
    <scope>IDENTIFICATION BY MASS SPECTROMETRY</scope>
    <source>
        <strain>Sprague-Dawley</strain>
        <tissue>Brain</tissue>
    </source>
</reference>
<reference key="8">
    <citation type="journal article" date="1993" name="J. Biol. Chem.">
        <title>Myristoylation of hippocalcin is linked to its calcium-dependent membrane association properties.</title>
        <authorList>
            <person name="Kobayashi M."/>
            <person name="Takamatsu K."/>
            <person name="Saitoh S."/>
            <person name="Noguchi T."/>
        </authorList>
    </citation>
    <scope>MYRISTOYLATION AT GLY-2</scope>
    <scope>CALCIUM-BINDING</scope>
    <scope>SUBCELLULAR LOCATION</scope>
    <scope>TOPOLOGY</scope>
</reference>
<proteinExistence type="evidence at protein level"/>
<dbReference type="EMBL" id="D12573">
    <property type="protein sequence ID" value="BAA02122.1"/>
    <property type="molecule type" value="mRNA"/>
</dbReference>
<dbReference type="EMBL" id="AY442172">
    <property type="protein sequence ID" value="AAR14053.1"/>
    <property type="molecule type" value="mRNA"/>
</dbReference>
<dbReference type="EMBL" id="BC087632">
    <property type="protein sequence ID" value="AAH87632.1"/>
    <property type="molecule type" value="mRNA"/>
</dbReference>
<dbReference type="EMBL" id="X96993">
    <property type="protein sequence ID" value="CAA65718.1"/>
    <property type="molecule type" value="Genomic_DNA"/>
</dbReference>
<dbReference type="PIR" id="JC1347">
    <property type="entry name" value="JC1347"/>
</dbReference>
<dbReference type="PIR" id="PS0344">
    <property type="entry name" value="PS0344"/>
</dbReference>
<dbReference type="RefSeq" id="NP_058818.1">
    <property type="nucleotide sequence ID" value="NM_017122.2"/>
</dbReference>
<dbReference type="RefSeq" id="XP_006238982.1">
    <property type="nucleotide sequence ID" value="XM_006238920.4"/>
</dbReference>
<dbReference type="RefSeq" id="XP_006238983.1">
    <property type="nucleotide sequence ID" value="XM_006238921.5"/>
</dbReference>
<dbReference type="SMR" id="P84076"/>
<dbReference type="CORUM" id="P84076"/>
<dbReference type="FunCoup" id="P84076">
    <property type="interactions" value="1121"/>
</dbReference>
<dbReference type="IntAct" id="P84076">
    <property type="interactions" value="3"/>
</dbReference>
<dbReference type="STRING" id="10116.ENSRNOP00000009153"/>
<dbReference type="iPTMnet" id="P84076"/>
<dbReference type="PhosphoSitePlus" id="P84076"/>
<dbReference type="SwissPalm" id="P84076"/>
<dbReference type="jPOST" id="P84076"/>
<dbReference type="PaxDb" id="10116-ENSRNOP00000009153"/>
<dbReference type="Ensembl" id="ENSRNOT00000009153.8">
    <property type="protein sequence ID" value="ENSRNOP00000009153.5"/>
    <property type="gene ID" value="ENSRNOG00000006979.8"/>
</dbReference>
<dbReference type="GeneID" id="29177"/>
<dbReference type="KEGG" id="rno:29177"/>
<dbReference type="AGR" id="RGD:620060"/>
<dbReference type="CTD" id="3208"/>
<dbReference type="RGD" id="620060">
    <property type="gene designation" value="Hpca"/>
</dbReference>
<dbReference type="eggNOG" id="KOG0044">
    <property type="taxonomic scope" value="Eukaryota"/>
</dbReference>
<dbReference type="GeneTree" id="ENSGT00940000158110"/>
<dbReference type="HOGENOM" id="CLU_072366_1_0_1"/>
<dbReference type="InParanoid" id="P84076"/>
<dbReference type="OMA" id="QMYDPAR"/>
<dbReference type="OrthoDB" id="9712at9989"/>
<dbReference type="PhylomeDB" id="P84076"/>
<dbReference type="TreeFam" id="TF300009"/>
<dbReference type="PRO" id="PR:P84076"/>
<dbReference type="Proteomes" id="UP000002494">
    <property type="component" value="Chromosome 5"/>
</dbReference>
<dbReference type="Bgee" id="ENSRNOG00000006979">
    <property type="expression patterns" value="Expressed in frontal cortex and 4 other cell types or tissues"/>
</dbReference>
<dbReference type="GO" id="GO:0030424">
    <property type="term" value="C:axon"/>
    <property type="evidence" value="ECO:0000314"/>
    <property type="project" value="RGD"/>
</dbReference>
<dbReference type="GO" id="GO:0005737">
    <property type="term" value="C:cytoplasm"/>
    <property type="evidence" value="ECO:0000266"/>
    <property type="project" value="RGD"/>
</dbReference>
<dbReference type="GO" id="GO:0005829">
    <property type="term" value="C:cytosol"/>
    <property type="evidence" value="ECO:0000314"/>
    <property type="project" value="UniProtKB"/>
</dbReference>
<dbReference type="GO" id="GO:0032839">
    <property type="term" value="C:dendrite cytoplasm"/>
    <property type="evidence" value="ECO:0000314"/>
    <property type="project" value="RGD"/>
</dbReference>
<dbReference type="GO" id="GO:0032590">
    <property type="term" value="C:dendrite membrane"/>
    <property type="evidence" value="ECO:0000314"/>
    <property type="project" value="RGD"/>
</dbReference>
<dbReference type="GO" id="GO:0044327">
    <property type="term" value="C:dendritic spine head"/>
    <property type="evidence" value="ECO:0000314"/>
    <property type="project" value="RGD"/>
</dbReference>
<dbReference type="GO" id="GO:0098978">
    <property type="term" value="C:glutamatergic synapse"/>
    <property type="evidence" value="ECO:0000314"/>
    <property type="project" value="SynGO"/>
</dbReference>
<dbReference type="GO" id="GO:0016020">
    <property type="term" value="C:membrane"/>
    <property type="evidence" value="ECO:0000314"/>
    <property type="project" value="UniProtKB"/>
</dbReference>
<dbReference type="GO" id="GO:0032809">
    <property type="term" value="C:neuronal cell body membrane"/>
    <property type="evidence" value="ECO:0000314"/>
    <property type="project" value="RGD"/>
</dbReference>
<dbReference type="GO" id="GO:0043204">
    <property type="term" value="C:perikaryon"/>
    <property type="evidence" value="ECO:0000314"/>
    <property type="project" value="RGD"/>
</dbReference>
<dbReference type="GO" id="GO:0098794">
    <property type="term" value="C:postsynapse"/>
    <property type="evidence" value="ECO:0000314"/>
    <property type="project" value="SynGO"/>
</dbReference>
<dbReference type="GO" id="GO:0003779">
    <property type="term" value="F:actin binding"/>
    <property type="evidence" value="ECO:0000250"/>
    <property type="project" value="UniProtKB"/>
</dbReference>
<dbReference type="GO" id="GO:0005509">
    <property type="term" value="F:calcium ion binding"/>
    <property type="evidence" value="ECO:0000314"/>
    <property type="project" value="UniProtKB"/>
</dbReference>
<dbReference type="GO" id="GO:0042802">
    <property type="term" value="F:identical protein binding"/>
    <property type="evidence" value="ECO:0000250"/>
    <property type="project" value="UniProtKB"/>
</dbReference>
<dbReference type="GO" id="GO:0019900">
    <property type="term" value="F:kinase binding"/>
    <property type="evidence" value="ECO:0000353"/>
    <property type="project" value="RGD"/>
</dbReference>
<dbReference type="GO" id="GO:0019722">
    <property type="term" value="P:calcium-mediated signaling"/>
    <property type="evidence" value="ECO:0000270"/>
    <property type="project" value="RGD"/>
</dbReference>
<dbReference type="GO" id="GO:0071277">
    <property type="term" value="P:cellular response to calcium ion"/>
    <property type="evidence" value="ECO:0000250"/>
    <property type="project" value="UniProtKB"/>
</dbReference>
<dbReference type="GO" id="GO:0071257">
    <property type="term" value="P:cellular response to electrical stimulus"/>
    <property type="evidence" value="ECO:0000270"/>
    <property type="project" value="RGD"/>
</dbReference>
<dbReference type="GO" id="GO:1905232">
    <property type="term" value="P:cellular response to L-glutamate"/>
    <property type="evidence" value="ECO:0000314"/>
    <property type="project" value="RGD"/>
</dbReference>
<dbReference type="GO" id="GO:0048839">
    <property type="term" value="P:inner ear development"/>
    <property type="evidence" value="ECO:0000266"/>
    <property type="project" value="RGD"/>
</dbReference>
<dbReference type="GO" id="GO:0090314">
    <property type="term" value="P:positive regulation of protein targeting to membrane"/>
    <property type="evidence" value="ECO:0000314"/>
    <property type="project" value="RGD"/>
</dbReference>
<dbReference type="GO" id="GO:0099149">
    <property type="term" value="P:regulation of postsynaptic neurotransmitter receptor internalization"/>
    <property type="evidence" value="ECO:0000314"/>
    <property type="project" value="SynGO"/>
</dbReference>
<dbReference type="GO" id="GO:0009966">
    <property type="term" value="P:regulation of signal transduction"/>
    <property type="evidence" value="ECO:0000318"/>
    <property type="project" value="GO_Central"/>
</dbReference>
<dbReference type="GO" id="GO:1901385">
    <property type="term" value="P:regulation of voltage-gated calcium channel activity"/>
    <property type="evidence" value="ECO:0000250"/>
    <property type="project" value="UniProtKB"/>
</dbReference>
<dbReference type="GO" id="GO:1904010">
    <property type="term" value="P:response to Aroclor 1254"/>
    <property type="evidence" value="ECO:0000270"/>
    <property type="project" value="RGD"/>
</dbReference>
<dbReference type="GO" id="GO:1901986">
    <property type="term" value="P:response to ketamine"/>
    <property type="evidence" value="ECO:0000270"/>
    <property type="project" value="RGD"/>
</dbReference>
<dbReference type="GO" id="GO:1902065">
    <property type="term" value="P:response to L-glutamate"/>
    <property type="evidence" value="ECO:0000270"/>
    <property type="project" value="RGD"/>
</dbReference>
<dbReference type="GO" id="GO:0060041">
    <property type="term" value="P:retina development in camera-type eye"/>
    <property type="evidence" value="ECO:0000270"/>
    <property type="project" value="RGD"/>
</dbReference>
<dbReference type="CDD" id="cd00051">
    <property type="entry name" value="EFh"/>
    <property type="match status" value="2"/>
</dbReference>
<dbReference type="FunFam" id="1.10.238.10:FF:000078">
    <property type="entry name" value="Hippocalcin-like 1"/>
    <property type="match status" value="1"/>
</dbReference>
<dbReference type="FunFam" id="1.10.238.10:FF:000072">
    <property type="entry name" value="Hippocalcin-like protein 1"/>
    <property type="match status" value="1"/>
</dbReference>
<dbReference type="Gene3D" id="1.10.238.10">
    <property type="entry name" value="EF-hand"/>
    <property type="match status" value="1"/>
</dbReference>
<dbReference type="InterPro" id="IPR011992">
    <property type="entry name" value="EF-hand-dom_pair"/>
</dbReference>
<dbReference type="InterPro" id="IPR018247">
    <property type="entry name" value="EF_Hand_1_Ca_BS"/>
</dbReference>
<dbReference type="InterPro" id="IPR002048">
    <property type="entry name" value="EF_hand_dom"/>
</dbReference>
<dbReference type="InterPro" id="IPR028846">
    <property type="entry name" value="Recoverin"/>
</dbReference>
<dbReference type="PANTHER" id="PTHR23055">
    <property type="entry name" value="CALCIUM BINDING PROTEINS"/>
    <property type="match status" value="1"/>
</dbReference>
<dbReference type="PANTHER" id="PTHR23055:SF57">
    <property type="entry name" value="NEURON-SPECIFIC CALCIUM-BINDING PROTEIN HIPPOCALCIN"/>
    <property type="match status" value="1"/>
</dbReference>
<dbReference type="Pfam" id="PF00036">
    <property type="entry name" value="EF-hand_1"/>
    <property type="match status" value="1"/>
</dbReference>
<dbReference type="Pfam" id="PF13499">
    <property type="entry name" value="EF-hand_7"/>
    <property type="match status" value="1"/>
</dbReference>
<dbReference type="PRINTS" id="PR00450">
    <property type="entry name" value="RECOVERIN"/>
</dbReference>
<dbReference type="SMART" id="SM00054">
    <property type="entry name" value="EFh"/>
    <property type="match status" value="3"/>
</dbReference>
<dbReference type="SUPFAM" id="SSF47473">
    <property type="entry name" value="EF-hand"/>
    <property type="match status" value="1"/>
</dbReference>
<dbReference type="PROSITE" id="PS00018">
    <property type="entry name" value="EF_HAND_1"/>
    <property type="match status" value="3"/>
</dbReference>
<dbReference type="PROSITE" id="PS50222">
    <property type="entry name" value="EF_HAND_2"/>
    <property type="match status" value="3"/>
</dbReference>
<accession>P84076</accession>
<accession>P32076</accession>
<accession>P41211</accession>
<accession>P70510</accession>
<evidence type="ECO:0000250" key="1">
    <source>
        <dbReference type="UniProtKB" id="P84074"/>
    </source>
</evidence>
<evidence type="ECO:0000255" key="2">
    <source>
        <dbReference type="PROSITE-ProRule" id="PRU00448"/>
    </source>
</evidence>
<evidence type="ECO:0000269" key="3">
    <source>
    </source>
</evidence>
<evidence type="ECO:0000269" key="4">
    <source>
    </source>
</evidence>
<evidence type="ECO:0000269" key="5">
    <source>
    </source>
</evidence>
<evidence type="ECO:0000269" key="6">
    <source>
    </source>
</evidence>
<evidence type="ECO:0000303" key="7">
    <source>
    </source>
</evidence>
<evidence type="ECO:0000305" key="8"/>
<evidence type="ECO:0000312" key="9">
    <source>
        <dbReference type="RGD" id="620060"/>
    </source>
</evidence>
<name>HPCA_RAT</name>
<keyword id="KW-0106">Calcium</keyword>
<keyword id="KW-0963">Cytoplasm</keyword>
<keyword id="KW-0903">Direct protein sequencing</keyword>
<keyword id="KW-0449">Lipoprotein</keyword>
<keyword id="KW-0472">Membrane</keyword>
<keyword id="KW-0479">Metal-binding</keyword>
<keyword id="KW-0519">Myristate</keyword>
<keyword id="KW-1185">Reference proteome</keyword>
<keyword id="KW-0677">Repeat</keyword>
<sequence>MGKQNSKLRPEMLQDLRENTEFSELELQEWYKGFLKDCPTGILNVDEFKKIYANFFPYGDASKFAEHVFRTFDTNSDGTIDFREFIIALSVTSRGRLEQKLMWAFSMYDLDGNGYISREEMLEIVQAIYKMVSSVMKMPEDESTPEKRTEKIFRQMDTNNDGKLSLEEFIRGAKSDPSIVRLLQCDPSSASQF</sequence>